<accession>B5E387</accession>
<evidence type="ECO:0000255" key="1">
    <source>
        <dbReference type="HAMAP-Rule" id="MF_00123"/>
    </source>
</evidence>
<gene>
    <name evidence="1" type="primary">argS</name>
    <name type="ordered locus">SPG_2017</name>
</gene>
<organism>
    <name type="scientific">Streptococcus pneumoniae serotype 19F (strain G54)</name>
    <dbReference type="NCBI Taxonomy" id="512566"/>
    <lineage>
        <taxon>Bacteria</taxon>
        <taxon>Bacillati</taxon>
        <taxon>Bacillota</taxon>
        <taxon>Bacilli</taxon>
        <taxon>Lactobacillales</taxon>
        <taxon>Streptococcaceae</taxon>
        <taxon>Streptococcus</taxon>
    </lineage>
</organism>
<feature type="chain" id="PRO_1000095411" description="Arginine--tRNA ligase">
    <location>
        <begin position="1"/>
        <end position="563"/>
    </location>
</feature>
<feature type="short sequence motif" description="'HIGH' region">
    <location>
        <begin position="121"/>
        <end position="131"/>
    </location>
</feature>
<comment type="catalytic activity">
    <reaction evidence="1">
        <text>tRNA(Arg) + L-arginine + ATP = L-arginyl-tRNA(Arg) + AMP + diphosphate</text>
        <dbReference type="Rhea" id="RHEA:20301"/>
        <dbReference type="Rhea" id="RHEA-COMP:9658"/>
        <dbReference type="Rhea" id="RHEA-COMP:9673"/>
        <dbReference type="ChEBI" id="CHEBI:30616"/>
        <dbReference type="ChEBI" id="CHEBI:32682"/>
        <dbReference type="ChEBI" id="CHEBI:33019"/>
        <dbReference type="ChEBI" id="CHEBI:78442"/>
        <dbReference type="ChEBI" id="CHEBI:78513"/>
        <dbReference type="ChEBI" id="CHEBI:456215"/>
        <dbReference type="EC" id="6.1.1.19"/>
    </reaction>
</comment>
<comment type="subunit">
    <text evidence="1">Monomer.</text>
</comment>
<comment type="subcellular location">
    <subcellularLocation>
        <location evidence="1">Cytoplasm</location>
    </subcellularLocation>
</comment>
<comment type="similarity">
    <text evidence="1">Belongs to the class-I aminoacyl-tRNA synthetase family.</text>
</comment>
<name>SYR_STRP4</name>
<dbReference type="EC" id="6.1.1.19" evidence="1"/>
<dbReference type="EMBL" id="CP001015">
    <property type="protein sequence ID" value="ACF56469.1"/>
    <property type="molecule type" value="Genomic_DNA"/>
</dbReference>
<dbReference type="SMR" id="B5E387"/>
<dbReference type="KEGG" id="spx:SPG_2017"/>
<dbReference type="HOGENOM" id="CLU_006406_6_1_9"/>
<dbReference type="GO" id="GO:0005737">
    <property type="term" value="C:cytoplasm"/>
    <property type="evidence" value="ECO:0007669"/>
    <property type="project" value="UniProtKB-SubCell"/>
</dbReference>
<dbReference type="GO" id="GO:0004814">
    <property type="term" value="F:arginine-tRNA ligase activity"/>
    <property type="evidence" value="ECO:0007669"/>
    <property type="project" value="UniProtKB-UniRule"/>
</dbReference>
<dbReference type="GO" id="GO:0005524">
    <property type="term" value="F:ATP binding"/>
    <property type="evidence" value="ECO:0007669"/>
    <property type="project" value="UniProtKB-UniRule"/>
</dbReference>
<dbReference type="GO" id="GO:0006420">
    <property type="term" value="P:arginyl-tRNA aminoacylation"/>
    <property type="evidence" value="ECO:0007669"/>
    <property type="project" value="UniProtKB-UniRule"/>
</dbReference>
<dbReference type="CDD" id="cd07956">
    <property type="entry name" value="Anticodon_Ia_Arg"/>
    <property type="match status" value="1"/>
</dbReference>
<dbReference type="CDD" id="cd00671">
    <property type="entry name" value="ArgRS_core"/>
    <property type="match status" value="1"/>
</dbReference>
<dbReference type="FunFam" id="1.10.730.10:FF:000034">
    <property type="entry name" value="Arginine--tRNA ligase"/>
    <property type="match status" value="1"/>
</dbReference>
<dbReference type="FunFam" id="3.30.1360.70:FF:000005">
    <property type="entry name" value="Arginine--tRNA ligase"/>
    <property type="match status" value="1"/>
</dbReference>
<dbReference type="FunFam" id="3.40.50.620:FF:000116">
    <property type="entry name" value="Arginine--tRNA ligase"/>
    <property type="match status" value="1"/>
</dbReference>
<dbReference type="Gene3D" id="3.30.1360.70">
    <property type="entry name" value="Arginyl tRNA synthetase N-terminal domain"/>
    <property type="match status" value="1"/>
</dbReference>
<dbReference type="Gene3D" id="3.40.50.620">
    <property type="entry name" value="HUPs"/>
    <property type="match status" value="1"/>
</dbReference>
<dbReference type="Gene3D" id="1.10.730.10">
    <property type="entry name" value="Isoleucyl-tRNA Synthetase, Domain 1"/>
    <property type="match status" value="1"/>
</dbReference>
<dbReference type="HAMAP" id="MF_00123">
    <property type="entry name" value="Arg_tRNA_synth"/>
    <property type="match status" value="1"/>
</dbReference>
<dbReference type="InterPro" id="IPR001278">
    <property type="entry name" value="Arg-tRNA-ligase"/>
</dbReference>
<dbReference type="InterPro" id="IPR005148">
    <property type="entry name" value="Arg-tRNA-synth_N"/>
</dbReference>
<dbReference type="InterPro" id="IPR036695">
    <property type="entry name" value="Arg-tRNA-synth_N_sf"/>
</dbReference>
<dbReference type="InterPro" id="IPR035684">
    <property type="entry name" value="ArgRS_core"/>
</dbReference>
<dbReference type="InterPro" id="IPR008909">
    <property type="entry name" value="DALR_anticod-bd"/>
</dbReference>
<dbReference type="InterPro" id="IPR014729">
    <property type="entry name" value="Rossmann-like_a/b/a_fold"/>
</dbReference>
<dbReference type="InterPro" id="IPR009080">
    <property type="entry name" value="tRNAsynth_Ia_anticodon-bd"/>
</dbReference>
<dbReference type="NCBIfam" id="TIGR00456">
    <property type="entry name" value="argS"/>
    <property type="match status" value="1"/>
</dbReference>
<dbReference type="PANTHER" id="PTHR11956:SF5">
    <property type="entry name" value="ARGININE--TRNA LIGASE, CYTOPLASMIC"/>
    <property type="match status" value="1"/>
</dbReference>
<dbReference type="PANTHER" id="PTHR11956">
    <property type="entry name" value="ARGINYL-TRNA SYNTHETASE"/>
    <property type="match status" value="1"/>
</dbReference>
<dbReference type="Pfam" id="PF03485">
    <property type="entry name" value="Arg_tRNA_synt_N"/>
    <property type="match status" value="1"/>
</dbReference>
<dbReference type="Pfam" id="PF05746">
    <property type="entry name" value="DALR_1"/>
    <property type="match status" value="1"/>
</dbReference>
<dbReference type="Pfam" id="PF00750">
    <property type="entry name" value="tRNA-synt_1d"/>
    <property type="match status" value="1"/>
</dbReference>
<dbReference type="PRINTS" id="PR01038">
    <property type="entry name" value="TRNASYNTHARG"/>
</dbReference>
<dbReference type="SMART" id="SM01016">
    <property type="entry name" value="Arg_tRNA_synt_N"/>
    <property type="match status" value="1"/>
</dbReference>
<dbReference type="SMART" id="SM00836">
    <property type="entry name" value="DALR_1"/>
    <property type="match status" value="1"/>
</dbReference>
<dbReference type="SUPFAM" id="SSF47323">
    <property type="entry name" value="Anticodon-binding domain of a subclass of class I aminoacyl-tRNA synthetases"/>
    <property type="match status" value="1"/>
</dbReference>
<dbReference type="SUPFAM" id="SSF55190">
    <property type="entry name" value="Arginyl-tRNA synthetase (ArgRS), N-terminal 'additional' domain"/>
    <property type="match status" value="1"/>
</dbReference>
<dbReference type="SUPFAM" id="SSF52374">
    <property type="entry name" value="Nucleotidylyl transferase"/>
    <property type="match status" value="1"/>
</dbReference>
<sequence>MNTKELIASELASIIDSLDQEAILKLLETPKNSEMGDIAFPAFSLAKVERKAPQMIATELAEKMNSQAFEKVVATGPYVNFFLDKSAISAQVLQAVTTEKEHYADQNIGKQENVVIDMSSPNIAKPFSIGHLRSTVIGDSLSHIFQKIGYQTVKVNHLGDWGKQFGMLIVAYKKWGDEEAVKAHPIDELLKLYVRINAEAENDPSLDEEAREWFRKLENGDEEALALWQWFRDESLVEFNRLYNELKVEFDSYNGEAFYNDKMDAVVDILSEKGLLLESEGAQVVNLEKYGIEHPALIKKSDGATLYITRDLAAALYRKNEYQFAKSIYVVGQEQSAHFKQLKAVLQEMGYDWSDDITHVPFGLVTKEGKKLSTRKGNVILLEPTVAEAVSRAKVQIEAKNPELENKDQIAHAVGVGAIKFYDLKTDRTNGYDFDLEAMVSFEGETGPYVQYAYARIQSILRKADFKPETAGNYSLNDTESWEIIKLIQDFPRIINRAADNFEPSIIAKFAISLAQSFNKYYAHTRILDESPERDSRLALSYATAVVLKEALRLLGVEAPEKM</sequence>
<proteinExistence type="inferred from homology"/>
<reference key="1">
    <citation type="journal article" date="2001" name="Microb. Drug Resist.">
        <title>Annotated draft genomic sequence from a Streptococcus pneumoniae type 19F clinical isolate.</title>
        <authorList>
            <person name="Dopazo J."/>
            <person name="Mendoza A."/>
            <person name="Herrero J."/>
            <person name="Caldara F."/>
            <person name="Humbert Y."/>
            <person name="Friedli L."/>
            <person name="Guerrier M."/>
            <person name="Grand-Schenk E."/>
            <person name="Gandin C."/>
            <person name="de Francesco M."/>
            <person name="Polissi A."/>
            <person name="Buell G."/>
            <person name="Feger G."/>
            <person name="Garcia E."/>
            <person name="Peitsch M."/>
            <person name="Garcia-Bustos J.F."/>
        </authorList>
    </citation>
    <scope>NUCLEOTIDE SEQUENCE [LARGE SCALE GENOMIC DNA]</scope>
    <source>
        <strain>G54</strain>
    </source>
</reference>
<reference key="2">
    <citation type="submission" date="2008-03" db="EMBL/GenBank/DDBJ databases">
        <title>Pneumococcal beta glucoside metabolism investigated by whole genome comparison.</title>
        <authorList>
            <person name="Mulas L."/>
            <person name="Trappetti C."/>
            <person name="Hakenbeck R."/>
            <person name="Iannelli F."/>
            <person name="Pozzi G."/>
            <person name="Davidsen T.M."/>
            <person name="Tettelin H."/>
            <person name="Oggioni M."/>
        </authorList>
    </citation>
    <scope>NUCLEOTIDE SEQUENCE [LARGE SCALE GENOMIC DNA]</scope>
    <source>
        <strain>G54</strain>
    </source>
</reference>
<protein>
    <recommendedName>
        <fullName evidence="1">Arginine--tRNA ligase</fullName>
        <ecNumber evidence="1">6.1.1.19</ecNumber>
    </recommendedName>
    <alternativeName>
        <fullName evidence="1">Arginyl-tRNA synthetase</fullName>
        <shortName evidence="1">ArgRS</shortName>
    </alternativeName>
</protein>
<keyword id="KW-0030">Aminoacyl-tRNA synthetase</keyword>
<keyword id="KW-0067">ATP-binding</keyword>
<keyword id="KW-0963">Cytoplasm</keyword>
<keyword id="KW-0436">Ligase</keyword>
<keyword id="KW-0547">Nucleotide-binding</keyword>
<keyword id="KW-0648">Protein biosynthesis</keyword>